<keyword id="KW-1185">Reference proteome</keyword>
<keyword id="KW-0687">Ribonucleoprotein</keyword>
<keyword id="KW-0689">Ribosomal protein</keyword>
<proteinExistence type="inferred from homology"/>
<dbReference type="EMBL" id="AE004437">
    <property type="protein sequence ID" value="AAG19256.1"/>
    <property type="molecule type" value="Genomic_DNA"/>
</dbReference>
<dbReference type="PIR" id="D84236">
    <property type="entry name" value="D84236"/>
</dbReference>
<dbReference type="RefSeq" id="WP_010902552.1">
    <property type="nucleotide sequence ID" value="NC_002607.1"/>
</dbReference>
<dbReference type="SMR" id="Q9HRA2"/>
<dbReference type="FunCoup" id="Q9HRA2">
    <property type="interactions" value="138"/>
</dbReference>
<dbReference type="STRING" id="64091.VNG_0790G"/>
<dbReference type="PaxDb" id="64091-VNG_0790G"/>
<dbReference type="KEGG" id="hal:VNG_0790G"/>
<dbReference type="PATRIC" id="fig|64091.14.peg.607"/>
<dbReference type="HOGENOM" id="CLU_090139_2_0_2"/>
<dbReference type="InParanoid" id="Q9HRA2"/>
<dbReference type="OrthoDB" id="6533at2157"/>
<dbReference type="PhylomeDB" id="Q9HRA2"/>
<dbReference type="Proteomes" id="UP000000554">
    <property type="component" value="Chromosome"/>
</dbReference>
<dbReference type="GO" id="GO:0022627">
    <property type="term" value="C:cytosolic small ribosomal subunit"/>
    <property type="evidence" value="ECO:0000318"/>
    <property type="project" value="GO_Central"/>
</dbReference>
<dbReference type="GO" id="GO:0070181">
    <property type="term" value="F:small ribosomal subunit rRNA binding"/>
    <property type="evidence" value="ECO:0000318"/>
    <property type="project" value="GO_Central"/>
</dbReference>
<dbReference type="GO" id="GO:0003735">
    <property type="term" value="F:structural constituent of ribosome"/>
    <property type="evidence" value="ECO:0000318"/>
    <property type="project" value="GO_Central"/>
</dbReference>
<dbReference type="GO" id="GO:0006412">
    <property type="term" value="P:translation"/>
    <property type="evidence" value="ECO:0007669"/>
    <property type="project" value="UniProtKB-UniRule"/>
</dbReference>
<dbReference type="CDD" id="cd00677">
    <property type="entry name" value="S15_NS1_EPRS_RNA-bind"/>
    <property type="match status" value="1"/>
</dbReference>
<dbReference type="Gene3D" id="4.10.860.130">
    <property type="match status" value="1"/>
</dbReference>
<dbReference type="Gene3D" id="1.10.287.10">
    <property type="entry name" value="S15/NS1, RNA-binding"/>
    <property type="match status" value="1"/>
</dbReference>
<dbReference type="HAMAP" id="MF_01343_A">
    <property type="entry name" value="Ribosomal_uS15_A"/>
    <property type="match status" value="1"/>
</dbReference>
<dbReference type="InterPro" id="IPR000589">
    <property type="entry name" value="Ribosomal_uS15"/>
</dbReference>
<dbReference type="InterPro" id="IPR023029">
    <property type="entry name" value="Ribosomal_uS15_arc_euk"/>
</dbReference>
<dbReference type="InterPro" id="IPR012606">
    <property type="entry name" value="Ribosomal_uS15_N"/>
</dbReference>
<dbReference type="InterPro" id="IPR009068">
    <property type="entry name" value="uS15_NS1_RNA-bd_sf"/>
</dbReference>
<dbReference type="NCBIfam" id="NF006331">
    <property type="entry name" value="PRK08561.1"/>
    <property type="match status" value="1"/>
</dbReference>
<dbReference type="PANTHER" id="PTHR11885">
    <property type="entry name" value="RIBOSOMAL PROTEIN S15P/S13E"/>
    <property type="match status" value="1"/>
</dbReference>
<dbReference type="PANTHER" id="PTHR11885:SF6">
    <property type="entry name" value="SMALL RIBOSOMAL SUBUNIT PROTEIN US15"/>
    <property type="match status" value="1"/>
</dbReference>
<dbReference type="Pfam" id="PF08069">
    <property type="entry name" value="Ribosomal_S13_N"/>
    <property type="match status" value="1"/>
</dbReference>
<dbReference type="Pfam" id="PF00312">
    <property type="entry name" value="Ribosomal_S15"/>
    <property type="match status" value="1"/>
</dbReference>
<dbReference type="SMART" id="SM01386">
    <property type="entry name" value="Ribosomal_S13_N"/>
    <property type="match status" value="1"/>
</dbReference>
<dbReference type="SMART" id="SM01387">
    <property type="entry name" value="Ribosomal_S15"/>
    <property type="match status" value="1"/>
</dbReference>
<dbReference type="SUPFAM" id="SSF47060">
    <property type="entry name" value="S15/NS1 RNA-binding domain"/>
    <property type="match status" value="1"/>
</dbReference>
<dbReference type="PROSITE" id="PS00362">
    <property type="entry name" value="RIBOSOMAL_S15"/>
    <property type="match status" value="1"/>
</dbReference>
<comment type="subunit">
    <text evidence="1">Part of the 30S ribosomal subunit.</text>
</comment>
<comment type="similarity">
    <text evidence="1">Belongs to the universal ribosomal protein uS15 family.</text>
</comment>
<protein>
    <recommendedName>
        <fullName evidence="1">Small ribosomal subunit protein uS15</fullName>
    </recommendedName>
    <alternativeName>
        <fullName evidence="3">30S ribosomal protein S15</fullName>
    </alternativeName>
</protein>
<accession>Q9HRA2</accession>
<reference key="1">
    <citation type="journal article" date="2000" name="Proc. Natl. Acad. Sci. U.S.A.">
        <title>Genome sequence of Halobacterium species NRC-1.</title>
        <authorList>
            <person name="Ng W.V."/>
            <person name="Kennedy S.P."/>
            <person name="Mahairas G.G."/>
            <person name="Berquist B."/>
            <person name="Pan M."/>
            <person name="Shukla H.D."/>
            <person name="Lasky S.R."/>
            <person name="Baliga N.S."/>
            <person name="Thorsson V."/>
            <person name="Sbrogna J."/>
            <person name="Swartzell S."/>
            <person name="Weir D."/>
            <person name="Hall J."/>
            <person name="Dahl T.A."/>
            <person name="Welti R."/>
            <person name="Goo Y.A."/>
            <person name="Leithauser B."/>
            <person name="Keller K."/>
            <person name="Cruz R."/>
            <person name="Danson M.J."/>
            <person name="Hough D.W."/>
            <person name="Maddocks D.G."/>
            <person name="Jablonski P.E."/>
            <person name="Krebs M.P."/>
            <person name="Angevine C.M."/>
            <person name="Dale H."/>
            <person name="Isenbarger T.A."/>
            <person name="Peck R.F."/>
            <person name="Pohlschroder M."/>
            <person name="Spudich J.L."/>
            <person name="Jung K.-H."/>
            <person name="Alam M."/>
            <person name="Freitas T."/>
            <person name="Hou S."/>
            <person name="Daniels C.J."/>
            <person name="Dennis P.P."/>
            <person name="Omer A.D."/>
            <person name="Ebhardt H."/>
            <person name="Lowe T.M."/>
            <person name="Liang P."/>
            <person name="Riley M."/>
            <person name="Hood L."/>
            <person name="DasSarma S."/>
        </authorList>
    </citation>
    <scope>NUCLEOTIDE SEQUENCE [LARGE SCALE GENOMIC DNA]</scope>
    <source>
        <strain>ATCC 700922 / JCM 11081 / NRC-1</strain>
    </source>
</reference>
<name>RS15_HALSA</name>
<organism>
    <name type="scientific">Halobacterium salinarum (strain ATCC 700922 / JCM 11081 / NRC-1)</name>
    <name type="common">Halobacterium halobium</name>
    <dbReference type="NCBI Taxonomy" id="64091"/>
    <lineage>
        <taxon>Archaea</taxon>
        <taxon>Methanobacteriati</taxon>
        <taxon>Methanobacteriota</taxon>
        <taxon>Stenosarchaea group</taxon>
        <taxon>Halobacteria</taxon>
        <taxon>Halobacteriales</taxon>
        <taxon>Halobacteriaceae</taxon>
        <taxon>Halobacterium</taxon>
        <taxon>Halobacterium salinarum NRC-34001</taxon>
    </lineage>
</organism>
<gene>
    <name evidence="1" type="primary">rps15</name>
    <name type="ordered locus">VNG_0790G</name>
</gene>
<feature type="chain" id="PRO_0000115604" description="Small ribosomal subunit protein uS15">
    <location>
        <begin position="1"/>
        <end position="155"/>
    </location>
</feature>
<feature type="region of interest" description="Disordered" evidence="2">
    <location>
        <begin position="1"/>
        <end position="66"/>
    </location>
</feature>
<feature type="compositionally biased region" description="Basic residues" evidence="2">
    <location>
        <begin position="1"/>
        <end position="10"/>
    </location>
</feature>
<feature type="compositionally biased region" description="Acidic residues" evidence="2">
    <location>
        <begin position="21"/>
        <end position="33"/>
    </location>
</feature>
<feature type="compositionally biased region" description="Basic and acidic residues" evidence="2">
    <location>
        <begin position="34"/>
        <end position="45"/>
    </location>
</feature>
<sequence length="155" mass="17714">MARMHTRRRGSSGSDRPTADEPPEWSDVDEDAIEERVVELAEQGHDPSQIGLKLRDEGVQGTPVPDVKLATGKKVTEILEAHDAEPELPEDFRNLLEKAVRLHEHVEANGQDHQNKRALQNTQSKIRRLADYYRGDKLDEEFAYSYETAREIIEE</sequence>
<evidence type="ECO:0000255" key="1">
    <source>
        <dbReference type="HAMAP-Rule" id="MF_01343"/>
    </source>
</evidence>
<evidence type="ECO:0000256" key="2">
    <source>
        <dbReference type="SAM" id="MobiDB-lite"/>
    </source>
</evidence>
<evidence type="ECO:0000305" key="3"/>